<evidence type="ECO:0000255" key="1">
    <source>
        <dbReference type="HAMAP-Rule" id="MF_01569"/>
    </source>
</evidence>
<accession>Q8PCS4</accession>
<gene>
    <name evidence="1" type="primary">proS</name>
    <name type="ordered locus">XCC0639</name>
</gene>
<protein>
    <recommendedName>
        <fullName evidence="1">Proline--tRNA ligase</fullName>
        <ecNumber evidence="1">6.1.1.15</ecNumber>
    </recommendedName>
    <alternativeName>
        <fullName evidence="1">Prolyl-tRNA synthetase</fullName>
        <shortName evidence="1">ProRS</shortName>
    </alternativeName>
</protein>
<comment type="function">
    <text evidence="1">Catalyzes the attachment of proline to tRNA(Pro) in a two-step reaction: proline is first activated by ATP to form Pro-AMP and then transferred to the acceptor end of tRNA(Pro). As ProRS can inadvertently accommodate and process non-cognate amino acids such as alanine and cysteine, to avoid such errors it has two additional distinct editing activities against alanine. One activity is designated as 'pretransfer' editing and involves the tRNA(Pro)-independent hydrolysis of activated Ala-AMP. The other activity is designated 'posttransfer' editing and involves deacylation of mischarged Ala-tRNA(Pro). The misacylated Cys-tRNA(Pro) is not edited by ProRS.</text>
</comment>
<comment type="catalytic activity">
    <reaction evidence="1">
        <text>tRNA(Pro) + L-proline + ATP = L-prolyl-tRNA(Pro) + AMP + diphosphate</text>
        <dbReference type="Rhea" id="RHEA:14305"/>
        <dbReference type="Rhea" id="RHEA-COMP:9700"/>
        <dbReference type="Rhea" id="RHEA-COMP:9702"/>
        <dbReference type="ChEBI" id="CHEBI:30616"/>
        <dbReference type="ChEBI" id="CHEBI:33019"/>
        <dbReference type="ChEBI" id="CHEBI:60039"/>
        <dbReference type="ChEBI" id="CHEBI:78442"/>
        <dbReference type="ChEBI" id="CHEBI:78532"/>
        <dbReference type="ChEBI" id="CHEBI:456215"/>
        <dbReference type="EC" id="6.1.1.15"/>
    </reaction>
</comment>
<comment type="subunit">
    <text evidence="1">Homodimer.</text>
</comment>
<comment type="subcellular location">
    <subcellularLocation>
        <location evidence="1">Cytoplasm</location>
    </subcellularLocation>
</comment>
<comment type="domain">
    <text evidence="1">Consists of three domains: the N-terminal catalytic domain, the editing domain and the C-terminal anticodon-binding domain.</text>
</comment>
<comment type="similarity">
    <text evidence="1">Belongs to the class-II aminoacyl-tRNA synthetase family. ProS type 1 subfamily.</text>
</comment>
<keyword id="KW-0030">Aminoacyl-tRNA synthetase</keyword>
<keyword id="KW-0067">ATP-binding</keyword>
<keyword id="KW-0963">Cytoplasm</keyword>
<keyword id="KW-0436">Ligase</keyword>
<keyword id="KW-0547">Nucleotide-binding</keyword>
<keyword id="KW-0648">Protein biosynthesis</keyword>
<keyword id="KW-1185">Reference proteome</keyword>
<dbReference type="EC" id="6.1.1.15" evidence="1"/>
<dbReference type="EMBL" id="AE008922">
    <property type="protein sequence ID" value="AAM39955.1"/>
    <property type="molecule type" value="Genomic_DNA"/>
</dbReference>
<dbReference type="RefSeq" id="NP_636031.1">
    <property type="nucleotide sequence ID" value="NC_003902.1"/>
</dbReference>
<dbReference type="RefSeq" id="WP_011035881.1">
    <property type="nucleotide sequence ID" value="NC_003902.1"/>
</dbReference>
<dbReference type="SMR" id="Q8PCS4"/>
<dbReference type="STRING" id="190485.XCC0639"/>
<dbReference type="EnsemblBacteria" id="AAM39955">
    <property type="protein sequence ID" value="AAM39955"/>
    <property type="gene ID" value="XCC0639"/>
</dbReference>
<dbReference type="KEGG" id="xcc:XCC0639"/>
<dbReference type="PATRIC" id="fig|190485.4.peg.700"/>
<dbReference type="eggNOG" id="COG0442">
    <property type="taxonomic scope" value="Bacteria"/>
</dbReference>
<dbReference type="HOGENOM" id="CLU_016739_0_0_6"/>
<dbReference type="OrthoDB" id="9809052at2"/>
<dbReference type="Proteomes" id="UP000001010">
    <property type="component" value="Chromosome"/>
</dbReference>
<dbReference type="GO" id="GO:0005829">
    <property type="term" value="C:cytosol"/>
    <property type="evidence" value="ECO:0000318"/>
    <property type="project" value="GO_Central"/>
</dbReference>
<dbReference type="GO" id="GO:0002161">
    <property type="term" value="F:aminoacyl-tRNA deacylase activity"/>
    <property type="evidence" value="ECO:0007669"/>
    <property type="project" value="InterPro"/>
</dbReference>
<dbReference type="GO" id="GO:0005524">
    <property type="term" value="F:ATP binding"/>
    <property type="evidence" value="ECO:0007669"/>
    <property type="project" value="UniProtKB-UniRule"/>
</dbReference>
<dbReference type="GO" id="GO:0004827">
    <property type="term" value="F:proline-tRNA ligase activity"/>
    <property type="evidence" value="ECO:0000318"/>
    <property type="project" value="GO_Central"/>
</dbReference>
<dbReference type="GO" id="GO:0006433">
    <property type="term" value="P:prolyl-tRNA aminoacylation"/>
    <property type="evidence" value="ECO:0000318"/>
    <property type="project" value="GO_Central"/>
</dbReference>
<dbReference type="CDD" id="cd04334">
    <property type="entry name" value="ProRS-INS"/>
    <property type="match status" value="1"/>
</dbReference>
<dbReference type="CDD" id="cd00861">
    <property type="entry name" value="ProRS_anticodon_short"/>
    <property type="match status" value="1"/>
</dbReference>
<dbReference type="CDD" id="cd00779">
    <property type="entry name" value="ProRS_core_prok"/>
    <property type="match status" value="1"/>
</dbReference>
<dbReference type="FunFam" id="3.30.930.10:FF:000012">
    <property type="entry name" value="Proline--tRNA ligase"/>
    <property type="match status" value="1"/>
</dbReference>
<dbReference type="FunFam" id="3.30.930.10:FF:000062">
    <property type="entry name" value="Proline--tRNA ligase"/>
    <property type="match status" value="1"/>
</dbReference>
<dbReference type="Gene3D" id="3.40.50.800">
    <property type="entry name" value="Anticodon-binding domain"/>
    <property type="match status" value="1"/>
</dbReference>
<dbReference type="Gene3D" id="3.30.930.10">
    <property type="entry name" value="Bira Bifunctional Protein, Domain 2"/>
    <property type="match status" value="2"/>
</dbReference>
<dbReference type="Gene3D" id="3.90.960.10">
    <property type="entry name" value="YbaK/aminoacyl-tRNA synthetase-associated domain"/>
    <property type="match status" value="1"/>
</dbReference>
<dbReference type="HAMAP" id="MF_01569">
    <property type="entry name" value="Pro_tRNA_synth_type1"/>
    <property type="match status" value="1"/>
</dbReference>
<dbReference type="InterPro" id="IPR002314">
    <property type="entry name" value="aa-tRNA-synt_IIb"/>
</dbReference>
<dbReference type="InterPro" id="IPR006195">
    <property type="entry name" value="aa-tRNA-synth_II"/>
</dbReference>
<dbReference type="InterPro" id="IPR045864">
    <property type="entry name" value="aa-tRNA-synth_II/BPL/LPL"/>
</dbReference>
<dbReference type="InterPro" id="IPR004154">
    <property type="entry name" value="Anticodon-bd"/>
</dbReference>
<dbReference type="InterPro" id="IPR036621">
    <property type="entry name" value="Anticodon-bd_dom_sf"/>
</dbReference>
<dbReference type="InterPro" id="IPR002316">
    <property type="entry name" value="Pro-tRNA-ligase_IIa"/>
</dbReference>
<dbReference type="InterPro" id="IPR004500">
    <property type="entry name" value="Pro-tRNA-synth_IIa_bac-type"/>
</dbReference>
<dbReference type="InterPro" id="IPR023717">
    <property type="entry name" value="Pro-tRNA-Synthase_IIa_type1"/>
</dbReference>
<dbReference type="InterPro" id="IPR050062">
    <property type="entry name" value="Pro-tRNA_synthetase"/>
</dbReference>
<dbReference type="InterPro" id="IPR044140">
    <property type="entry name" value="ProRS_anticodon_short"/>
</dbReference>
<dbReference type="InterPro" id="IPR033730">
    <property type="entry name" value="ProRS_core_prok"/>
</dbReference>
<dbReference type="InterPro" id="IPR036754">
    <property type="entry name" value="YbaK/aa-tRNA-synt-asso_dom_sf"/>
</dbReference>
<dbReference type="InterPro" id="IPR007214">
    <property type="entry name" value="YbaK/aa-tRNA-synth-assoc-dom"/>
</dbReference>
<dbReference type="NCBIfam" id="NF006625">
    <property type="entry name" value="PRK09194.1"/>
    <property type="match status" value="1"/>
</dbReference>
<dbReference type="NCBIfam" id="TIGR00409">
    <property type="entry name" value="proS_fam_II"/>
    <property type="match status" value="1"/>
</dbReference>
<dbReference type="PANTHER" id="PTHR42753">
    <property type="entry name" value="MITOCHONDRIAL RIBOSOME PROTEIN L39/PROLYL-TRNA LIGASE FAMILY MEMBER"/>
    <property type="match status" value="1"/>
</dbReference>
<dbReference type="PANTHER" id="PTHR42753:SF2">
    <property type="entry name" value="PROLINE--TRNA LIGASE"/>
    <property type="match status" value="1"/>
</dbReference>
<dbReference type="Pfam" id="PF03129">
    <property type="entry name" value="HGTP_anticodon"/>
    <property type="match status" value="1"/>
</dbReference>
<dbReference type="Pfam" id="PF00587">
    <property type="entry name" value="tRNA-synt_2b"/>
    <property type="match status" value="1"/>
</dbReference>
<dbReference type="Pfam" id="PF04073">
    <property type="entry name" value="tRNA_edit"/>
    <property type="match status" value="1"/>
</dbReference>
<dbReference type="PRINTS" id="PR01046">
    <property type="entry name" value="TRNASYNTHPRO"/>
</dbReference>
<dbReference type="SUPFAM" id="SSF52954">
    <property type="entry name" value="Class II aaRS ABD-related"/>
    <property type="match status" value="1"/>
</dbReference>
<dbReference type="SUPFAM" id="SSF55681">
    <property type="entry name" value="Class II aaRS and biotin synthetases"/>
    <property type="match status" value="1"/>
</dbReference>
<dbReference type="SUPFAM" id="SSF55826">
    <property type="entry name" value="YbaK/ProRS associated domain"/>
    <property type="match status" value="1"/>
</dbReference>
<dbReference type="PROSITE" id="PS50862">
    <property type="entry name" value="AA_TRNA_LIGASE_II"/>
    <property type="match status" value="1"/>
</dbReference>
<organism>
    <name type="scientific">Xanthomonas campestris pv. campestris (strain ATCC 33913 / DSM 3586 / NCPPB 528 / LMG 568 / P 25)</name>
    <dbReference type="NCBI Taxonomy" id="190485"/>
    <lineage>
        <taxon>Bacteria</taxon>
        <taxon>Pseudomonadati</taxon>
        <taxon>Pseudomonadota</taxon>
        <taxon>Gammaproteobacteria</taxon>
        <taxon>Lysobacterales</taxon>
        <taxon>Lysobacteraceae</taxon>
        <taxon>Xanthomonas</taxon>
    </lineage>
</organism>
<proteinExistence type="inferred from homology"/>
<feature type="chain" id="PRO_0000248816" description="Proline--tRNA ligase">
    <location>
        <begin position="1"/>
        <end position="564"/>
    </location>
</feature>
<sequence length="564" mass="61568">MRLSQFHLHTTKETPADAELVSHRLMLRAGMIRKLASGLYTWSPLGLRVLRKVEAIVREEMNRAGAVEVLFPTIQPRELWDATGRWEKFGGQLLKIKDRKEQEFCYTPTAEEAAAEFARQEINSYKQLPLNFYQIQTKFRDEIRPRFGVMRAREFLMKDAYSFHLTDADMAREYDNMRAAYIRIFTRLGLEFRAVQADSGAIGGDASQEFHVIAESGEDSLAFSTGSDYAANVETASAALPAPRPAAGETLQRVDTPTQKTCEDVAQLLGLPLQRTVKSIAVMTTAGFVLVLVRGDHAVNELKLAKVAGMADYRLANESEIRQHLGSEPGFLGPVQPAQPIRIIADRDVAAMADFVVGANAVGVHLTGVNWGRDLPEPETVADVRNVVDGDRASDGGELRLTRGIEVGHVFQLGSKYAEALQATVLDENGKAAVMKMGCYGIGISRIVAAAIEQNHDDAGIVWPAPMAPWKVVVCVINPKQDAQVAAAAGDLLEELIAAGIDAALDDRGLRPGAMFADMELLGVPHRVVVSERGLAAGTFEYRARTAESAENLDKAGLFSRLGN</sequence>
<reference key="1">
    <citation type="journal article" date="2002" name="Nature">
        <title>Comparison of the genomes of two Xanthomonas pathogens with differing host specificities.</title>
        <authorList>
            <person name="da Silva A.C.R."/>
            <person name="Ferro J.A."/>
            <person name="Reinach F.C."/>
            <person name="Farah C.S."/>
            <person name="Furlan L.R."/>
            <person name="Quaggio R.B."/>
            <person name="Monteiro-Vitorello C.B."/>
            <person name="Van Sluys M.A."/>
            <person name="Almeida N.F. Jr."/>
            <person name="Alves L.M.C."/>
            <person name="do Amaral A.M."/>
            <person name="Bertolini M.C."/>
            <person name="Camargo L.E.A."/>
            <person name="Camarotte G."/>
            <person name="Cannavan F."/>
            <person name="Cardozo J."/>
            <person name="Chambergo F."/>
            <person name="Ciapina L.P."/>
            <person name="Cicarelli R.M.B."/>
            <person name="Coutinho L.L."/>
            <person name="Cursino-Santos J.R."/>
            <person name="El-Dorry H."/>
            <person name="Faria J.B."/>
            <person name="Ferreira A.J.S."/>
            <person name="Ferreira R.C.C."/>
            <person name="Ferro M.I.T."/>
            <person name="Formighieri E.F."/>
            <person name="Franco M.C."/>
            <person name="Greggio C.C."/>
            <person name="Gruber A."/>
            <person name="Katsuyama A.M."/>
            <person name="Kishi L.T."/>
            <person name="Leite R.P."/>
            <person name="Lemos E.G.M."/>
            <person name="Lemos M.V.F."/>
            <person name="Locali E.C."/>
            <person name="Machado M.A."/>
            <person name="Madeira A.M.B.N."/>
            <person name="Martinez-Rossi N.M."/>
            <person name="Martins E.C."/>
            <person name="Meidanis J."/>
            <person name="Menck C.F.M."/>
            <person name="Miyaki C.Y."/>
            <person name="Moon D.H."/>
            <person name="Moreira L.M."/>
            <person name="Novo M.T.M."/>
            <person name="Okura V.K."/>
            <person name="Oliveira M.C."/>
            <person name="Oliveira V.R."/>
            <person name="Pereira H.A."/>
            <person name="Rossi A."/>
            <person name="Sena J.A.D."/>
            <person name="Silva C."/>
            <person name="de Souza R.F."/>
            <person name="Spinola L.A.F."/>
            <person name="Takita M.A."/>
            <person name="Tamura R.E."/>
            <person name="Teixeira E.C."/>
            <person name="Tezza R.I.D."/>
            <person name="Trindade dos Santos M."/>
            <person name="Truffi D."/>
            <person name="Tsai S.M."/>
            <person name="White F.F."/>
            <person name="Setubal J.C."/>
            <person name="Kitajima J.P."/>
        </authorList>
    </citation>
    <scope>NUCLEOTIDE SEQUENCE [LARGE SCALE GENOMIC DNA]</scope>
    <source>
        <strain>ATCC 33913 / DSM 3586 / NCPPB 528 / LMG 568 / P 25</strain>
    </source>
</reference>
<name>SYP_XANCP</name>